<organism>
    <name type="scientific">Pseudomonas putida (strain W619)</name>
    <dbReference type="NCBI Taxonomy" id="390235"/>
    <lineage>
        <taxon>Bacteria</taxon>
        <taxon>Pseudomonadati</taxon>
        <taxon>Pseudomonadota</taxon>
        <taxon>Gammaproteobacteria</taxon>
        <taxon>Pseudomonadales</taxon>
        <taxon>Pseudomonadaceae</taxon>
        <taxon>Pseudomonas</taxon>
    </lineage>
</organism>
<protein>
    <recommendedName>
        <fullName evidence="1">GTPase Era</fullName>
    </recommendedName>
</protein>
<accession>B1J4E1</accession>
<proteinExistence type="inferred from homology"/>
<name>ERA_PSEPW</name>
<feature type="chain" id="PRO_1000121346" description="GTPase Era">
    <location>
        <begin position="1"/>
        <end position="300"/>
    </location>
</feature>
<feature type="domain" description="Era-type G" evidence="2">
    <location>
        <begin position="8"/>
        <end position="176"/>
    </location>
</feature>
<feature type="domain" description="KH type-2" evidence="1">
    <location>
        <begin position="199"/>
        <end position="283"/>
    </location>
</feature>
<feature type="region of interest" description="G1" evidence="2">
    <location>
        <begin position="16"/>
        <end position="23"/>
    </location>
</feature>
<feature type="region of interest" description="G2" evidence="2">
    <location>
        <begin position="42"/>
        <end position="46"/>
    </location>
</feature>
<feature type="region of interest" description="G3" evidence="2">
    <location>
        <begin position="63"/>
        <end position="66"/>
    </location>
</feature>
<feature type="region of interest" description="G4" evidence="2">
    <location>
        <begin position="125"/>
        <end position="128"/>
    </location>
</feature>
<feature type="region of interest" description="G5" evidence="2">
    <location>
        <begin position="155"/>
        <end position="157"/>
    </location>
</feature>
<feature type="binding site" evidence="1">
    <location>
        <begin position="16"/>
        <end position="23"/>
    </location>
    <ligand>
        <name>GTP</name>
        <dbReference type="ChEBI" id="CHEBI:37565"/>
    </ligand>
</feature>
<feature type="binding site" evidence="1">
    <location>
        <begin position="63"/>
        <end position="67"/>
    </location>
    <ligand>
        <name>GTP</name>
        <dbReference type="ChEBI" id="CHEBI:37565"/>
    </ligand>
</feature>
<feature type="binding site" evidence="1">
    <location>
        <begin position="125"/>
        <end position="128"/>
    </location>
    <ligand>
        <name>GTP</name>
        <dbReference type="ChEBI" id="CHEBI:37565"/>
    </ligand>
</feature>
<reference key="1">
    <citation type="submission" date="2008-02" db="EMBL/GenBank/DDBJ databases">
        <title>Complete sequence of Pseudomonas putida W619.</title>
        <authorList>
            <person name="Copeland A."/>
            <person name="Lucas S."/>
            <person name="Lapidus A."/>
            <person name="Barry K."/>
            <person name="Detter J.C."/>
            <person name="Glavina del Rio T."/>
            <person name="Dalin E."/>
            <person name="Tice H."/>
            <person name="Pitluck S."/>
            <person name="Chain P."/>
            <person name="Malfatti S."/>
            <person name="Shin M."/>
            <person name="Vergez L."/>
            <person name="Schmutz J."/>
            <person name="Larimer F."/>
            <person name="Land M."/>
            <person name="Hauser L."/>
            <person name="Kyrpides N."/>
            <person name="Kim E."/>
            <person name="Taghavi S."/>
            <person name="Vangronsveld D."/>
            <person name="van der Lelie D."/>
            <person name="Richardson P."/>
        </authorList>
    </citation>
    <scope>NUCLEOTIDE SEQUENCE [LARGE SCALE GENOMIC DNA]</scope>
    <source>
        <strain>W619</strain>
    </source>
</reference>
<keyword id="KW-0997">Cell inner membrane</keyword>
<keyword id="KW-1003">Cell membrane</keyword>
<keyword id="KW-0963">Cytoplasm</keyword>
<keyword id="KW-0342">GTP-binding</keyword>
<keyword id="KW-0472">Membrane</keyword>
<keyword id="KW-0547">Nucleotide-binding</keyword>
<keyword id="KW-0690">Ribosome biogenesis</keyword>
<keyword id="KW-0694">RNA-binding</keyword>
<keyword id="KW-0699">rRNA-binding</keyword>
<comment type="function">
    <text evidence="1">An essential GTPase that binds both GDP and GTP, with rapid nucleotide exchange. Plays a role in 16S rRNA processing and 30S ribosomal subunit biogenesis and possibly also in cell cycle regulation and energy metabolism.</text>
</comment>
<comment type="subunit">
    <text evidence="1">Monomer.</text>
</comment>
<comment type="subcellular location">
    <subcellularLocation>
        <location>Cytoplasm</location>
    </subcellularLocation>
    <subcellularLocation>
        <location evidence="1">Cell inner membrane</location>
        <topology evidence="1">Peripheral membrane protein</topology>
    </subcellularLocation>
</comment>
<comment type="similarity">
    <text evidence="1 2">Belongs to the TRAFAC class TrmE-Era-EngA-EngB-Septin-like GTPase superfamily. Era GTPase family.</text>
</comment>
<gene>
    <name evidence="1" type="primary">era</name>
    <name type="ordered locus">PputW619_1074</name>
</gene>
<evidence type="ECO:0000255" key="1">
    <source>
        <dbReference type="HAMAP-Rule" id="MF_00367"/>
    </source>
</evidence>
<evidence type="ECO:0000255" key="2">
    <source>
        <dbReference type="PROSITE-ProRule" id="PRU01050"/>
    </source>
</evidence>
<dbReference type="EMBL" id="CP000949">
    <property type="protein sequence ID" value="ACA71579.1"/>
    <property type="molecule type" value="Genomic_DNA"/>
</dbReference>
<dbReference type="SMR" id="B1J4E1"/>
<dbReference type="STRING" id="390235.PputW619_1074"/>
<dbReference type="KEGG" id="ppw:PputW619_1074"/>
<dbReference type="eggNOG" id="COG1159">
    <property type="taxonomic scope" value="Bacteria"/>
</dbReference>
<dbReference type="HOGENOM" id="CLU_038009_1_2_6"/>
<dbReference type="OrthoDB" id="9805918at2"/>
<dbReference type="GO" id="GO:0005829">
    <property type="term" value="C:cytosol"/>
    <property type="evidence" value="ECO:0007669"/>
    <property type="project" value="TreeGrafter"/>
</dbReference>
<dbReference type="GO" id="GO:0005886">
    <property type="term" value="C:plasma membrane"/>
    <property type="evidence" value="ECO:0007669"/>
    <property type="project" value="UniProtKB-SubCell"/>
</dbReference>
<dbReference type="GO" id="GO:0005525">
    <property type="term" value="F:GTP binding"/>
    <property type="evidence" value="ECO:0007669"/>
    <property type="project" value="UniProtKB-UniRule"/>
</dbReference>
<dbReference type="GO" id="GO:0003924">
    <property type="term" value="F:GTPase activity"/>
    <property type="evidence" value="ECO:0007669"/>
    <property type="project" value="UniProtKB-UniRule"/>
</dbReference>
<dbReference type="GO" id="GO:0043024">
    <property type="term" value="F:ribosomal small subunit binding"/>
    <property type="evidence" value="ECO:0007669"/>
    <property type="project" value="TreeGrafter"/>
</dbReference>
<dbReference type="GO" id="GO:0070181">
    <property type="term" value="F:small ribosomal subunit rRNA binding"/>
    <property type="evidence" value="ECO:0007669"/>
    <property type="project" value="UniProtKB-UniRule"/>
</dbReference>
<dbReference type="GO" id="GO:0000028">
    <property type="term" value="P:ribosomal small subunit assembly"/>
    <property type="evidence" value="ECO:0007669"/>
    <property type="project" value="TreeGrafter"/>
</dbReference>
<dbReference type="CDD" id="cd04163">
    <property type="entry name" value="Era"/>
    <property type="match status" value="1"/>
</dbReference>
<dbReference type="CDD" id="cd22534">
    <property type="entry name" value="KH-II_Era"/>
    <property type="match status" value="1"/>
</dbReference>
<dbReference type="FunFam" id="3.30.300.20:FF:000003">
    <property type="entry name" value="GTPase Era"/>
    <property type="match status" value="1"/>
</dbReference>
<dbReference type="FunFam" id="3.40.50.300:FF:000094">
    <property type="entry name" value="GTPase Era"/>
    <property type="match status" value="1"/>
</dbReference>
<dbReference type="Gene3D" id="3.30.300.20">
    <property type="match status" value="1"/>
</dbReference>
<dbReference type="Gene3D" id="3.40.50.300">
    <property type="entry name" value="P-loop containing nucleotide triphosphate hydrolases"/>
    <property type="match status" value="1"/>
</dbReference>
<dbReference type="HAMAP" id="MF_00367">
    <property type="entry name" value="GTPase_Era"/>
    <property type="match status" value="1"/>
</dbReference>
<dbReference type="InterPro" id="IPR030388">
    <property type="entry name" value="G_ERA_dom"/>
</dbReference>
<dbReference type="InterPro" id="IPR006073">
    <property type="entry name" value="GTP-bd"/>
</dbReference>
<dbReference type="InterPro" id="IPR005662">
    <property type="entry name" value="GTPase_Era-like"/>
</dbReference>
<dbReference type="InterPro" id="IPR015946">
    <property type="entry name" value="KH_dom-like_a/b"/>
</dbReference>
<dbReference type="InterPro" id="IPR004044">
    <property type="entry name" value="KH_dom_type_2"/>
</dbReference>
<dbReference type="InterPro" id="IPR009019">
    <property type="entry name" value="KH_sf_prok-type"/>
</dbReference>
<dbReference type="InterPro" id="IPR027417">
    <property type="entry name" value="P-loop_NTPase"/>
</dbReference>
<dbReference type="InterPro" id="IPR005225">
    <property type="entry name" value="Small_GTP-bd"/>
</dbReference>
<dbReference type="NCBIfam" id="TIGR00436">
    <property type="entry name" value="era"/>
    <property type="match status" value="1"/>
</dbReference>
<dbReference type="NCBIfam" id="NF000908">
    <property type="entry name" value="PRK00089.1"/>
    <property type="match status" value="1"/>
</dbReference>
<dbReference type="NCBIfam" id="TIGR00231">
    <property type="entry name" value="small_GTP"/>
    <property type="match status" value="1"/>
</dbReference>
<dbReference type="PANTHER" id="PTHR42698">
    <property type="entry name" value="GTPASE ERA"/>
    <property type="match status" value="1"/>
</dbReference>
<dbReference type="PANTHER" id="PTHR42698:SF1">
    <property type="entry name" value="GTPASE ERA, MITOCHONDRIAL"/>
    <property type="match status" value="1"/>
</dbReference>
<dbReference type="Pfam" id="PF07650">
    <property type="entry name" value="KH_2"/>
    <property type="match status" value="1"/>
</dbReference>
<dbReference type="Pfam" id="PF01926">
    <property type="entry name" value="MMR_HSR1"/>
    <property type="match status" value="1"/>
</dbReference>
<dbReference type="PRINTS" id="PR00326">
    <property type="entry name" value="GTP1OBG"/>
</dbReference>
<dbReference type="SUPFAM" id="SSF52540">
    <property type="entry name" value="P-loop containing nucleoside triphosphate hydrolases"/>
    <property type="match status" value="1"/>
</dbReference>
<dbReference type="SUPFAM" id="SSF54814">
    <property type="entry name" value="Prokaryotic type KH domain (KH-domain type II)"/>
    <property type="match status" value="1"/>
</dbReference>
<dbReference type="PROSITE" id="PS51713">
    <property type="entry name" value="G_ERA"/>
    <property type="match status" value="1"/>
</dbReference>
<dbReference type="PROSITE" id="PS50823">
    <property type="entry name" value="KH_TYPE_2"/>
    <property type="match status" value="1"/>
</dbReference>
<sequence>MTENNPTRCGYVAIVGRPNVGKSTLLNHILGQKLAITSRKPQTTRHNMLGIKTEGDVQAIYVDTPGMHKANDKALNRYMNRNASAALKDVDVVIFVVDRTRWTDEDQLVLERVQYVTGPLIIAVNKTDRMDEKAELIPHLQWLQEQLPNAEVVPISAQQGHNLEALEALIAKHLPENDHFFPEDQITDRSSRFLAAELVREKIMRQLGAELPYQITVEIEEFKQQGHVLHIHALILVERDGQKKIIIGDKGERIKRIGSDARKDMETLFDAKVMLNLWVKVKGGWSDDERALRSLGYGDL</sequence>